<comment type="catalytic activity">
    <reaction evidence="1">
        <text>D-arabinose 5-phosphate + phosphoenolpyruvate + H2O = 3-deoxy-alpha-D-manno-2-octulosonate-8-phosphate + phosphate</text>
        <dbReference type="Rhea" id="RHEA:14053"/>
        <dbReference type="ChEBI" id="CHEBI:15377"/>
        <dbReference type="ChEBI" id="CHEBI:43474"/>
        <dbReference type="ChEBI" id="CHEBI:57693"/>
        <dbReference type="ChEBI" id="CHEBI:58702"/>
        <dbReference type="ChEBI" id="CHEBI:85985"/>
        <dbReference type="EC" id="2.5.1.55"/>
    </reaction>
</comment>
<comment type="pathway">
    <text evidence="1">Carbohydrate biosynthesis; 3-deoxy-D-manno-octulosonate biosynthesis; 3-deoxy-D-manno-octulosonate from D-ribulose 5-phosphate: step 2/3.</text>
</comment>
<comment type="pathway">
    <text evidence="1">Bacterial outer membrane biogenesis; lipopolysaccharide biosynthesis.</text>
</comment>
<comment type="subcellular location">
    <subcellularLocation>
        <location evidence="1">Cytoplasm</location>
    </subcellularLocation>
</comment>
<comment type="similarity">
    <text evidence="1">Belongs to the KdsA family.</text>
</comment>
<proteinExistence type="inferred from homology"/>
<evidence type="ECO:0000255" key="1">
    <source>
        <dbReference type="HAMAP-Rule" id="MF_00056"/>
    </source>
</evidence>
<dbReference type="EC" id="2.5.1.55" evidence="1"/>
<dbReference type="EMBL" id="AM286415">
    <property type="protein sequence ID" value="CAL12474.1"/>
    <property type="molecule type" value="Genomic_DNA"/>
</dbReference>
<dbReference type="RefSeq" id="WP_005161312.1">
    <property type="nucleotide sequence ID" value="NC_008800.1"/>
</dbReference>
<dbReference type="RefSeq" id="YP_001006640.1">
    <property type="nucleotide sequence ID" value="NC_008800.1"/>
</dbReference>
<dbReference type="SMR" id="A1JRS8"/>
<dbReference type="GeneID" id="31409322"/>
<dbReference type="KEGG" id="yen:YE2427"/>
<dbReference type="PATRIC" id="fig|393305.7.peg.2578"/>
<dbReference type="eggNOG" id="COG2877">
    <property type="taxonomic scope" value="Bacteria"/>
</dbReference>
<dbReference type="HOGENOM" id="CLU_036666_0_0_6"/>
<dbReference type="OrthoDB" id="9776934at2"/>
<dbReference type="UniPathway" id="UPA00030"/>
<dbReference type="UniPathway" id="UPA00357">
    <property type="reaction ID" value="UER00474"/>
</dbReference>
<dbReference type="Proteomes" id="UP000000642">
    <property type="component" value="Chromosome"/>
</dbReference>
<dbReference type="GO" id="GO:0005737">
    <property type="term" value="C:cytoplasm"/>
    <property type="evidence" value="ECO:0007669"/>
    <property type="project" value="UniProtKB-SubCell"/>
</dbReference>
<dbReference type="GO" id="GO:0008676">
    <property type="term" value="F:3-deoxy-8-phosphooctulonate synthase activity"/>
    <property type="evidence" value="ECO:0007669"/>
    <property type="project" value="UniProtKB-UniRule"/>
</dbReference>
<dbReference type="GO" id="GO:0019294">
    <property type="term" value="P:keto-3-deoxy-D-manno-octulosonic acid biosynthetic process"/>
    <property type="evidence" value="ECO:0007669"/>
    <property type="project" value="UniProtKB-UniRule"/>
</dbReference>
<dbReference type="FunFam" id="3.20.20.70:FF:000058">
    <property type="entry name" value="2-dehydro-3-deoxyphosphooctonate aldolase"/>
    <property type="match status" value="1"/>
</dbReference>
<dbReference type="Gene3D" id="3.20.20.70">
    <property type="entry name" value="Aldolase class I"/>
    <property type="match status" value="1"/>
</dbReference>
<dbReference type="HAMAP" id="MF_00056">
    <property type="entry name" value="KDO8P_synth"/>
    <property type="match status" value="1"/>
</dbReference>
<dbReference type="InterPro" id="IPR013785">
    <property type="entry name" value="Aldolase_TIM"/>
</dbReference>
<dbReference type="InterPro" id="IPR006218">
    <property type="entry name" value="DAHP1/KDSA"/>
</dbReference>
<dbReference type="InterPro" id="IPR006269">
    <property type="entry name" value="KDO8P_synthase"/>
</dbReference>
<dbReference type="NCBIfam" id="TIGR01362">
    <property type="entry name" value="KDO8P_synth"/>
    <property type="match status" value="1"/>
</dbReference>
<dbReference type="NCBIfam" id="NF003543">
    <property type="entry name" value="PRK05198.1"/>
    <property type="match status" value="1"/>
</dbReference>
<dbReference type="NCBIfam" id="NF009109">
    <property type="entry name" value="PRK12457.1"/>
    <property type="match status" value="1"/>
</dbReference>
<dbReference type="PANTHER" id="PTHR21057">
    <property type="entry name" value="PHOSPHO-2-DEHYDRO-3-DEOXYHEPTONATE ALDOLASE"/>
    <property type="match status" value="1"/>
</dbReference>
<dbReference type="Pfam" id="PF00793">
    <property type="entry name" value="DAHP_synth_1"/>
    <property type="match status" value="1"/>
</dbReference>
<dbReference type="SUPFAM" id="SSF51569">
    <property type="entry name" value="Aldolase"/>
    <property type="match status" value="1"/>
</dbReference>
<keyword id="KW-0963">Cytoplasm</keyword>
<keyword id="KW-0448">Lipopolysaccharide biosynthesis</keyword>
<keyword id="KW-0808">Transferase</keyword>
<accession>A1JRS8</accession>
<name>KDSA_YERE8</name>
<sequence length="284" mass="30919">MKQKVVSIGDIKVANDLPFVLFGGMNVLESRDLAMRICEHYVTVTQKLGIPYVFKASFDKANRSSIHSYRGPGLEEGMKIFQELKQQFGVKVITDVHEISQCQPVAEVVDVIQLPAFLARQTDLVEAMARTGAVINVKKPQFVSPGQMGNIVEKFKEAGNDQVILCDRGSNFGYDNLVVDMLGINVMVKATGGHPVIFDVTHALQCRDPFGSASGGRRAQVAELARAGMAVGLAGLFIEAHPEPNSAKCDGPSALPLDKLEPFLMQMKAIDDLVKSFPELDTSK</sequence>
<gene>
    <name evidence="1" type="primary">kdsA</name>
    <name type="ordered locus">YE2427</name>
</gene>
<feature type="chain" id="PRO_0000304505" description="2-dehydro-3-deoxyphosphooctonate aldolase">
    <location>
        <begin position="1"/>
        <end position="284"/>
    </location>
</feature>
<organism>
    <name type="scientific">Yersinia enterocolitica serotype O:8 / biotype 1B (strain NCTC 13174 / 8081)</name>
    <dbReference type="NCBI Taxonomy" id="393305"/>
    <lineage>
        <taxon>Bacteria</taxon>
        <taxon>Pseudomonadati</taxon>
        <taxon>Pseudomonadota</taxon>
        <taxon>Gammaproteobacteria</taxon>
        <taxon>Enterobacterales</taxon>
        <taxon>Yersiniaceae</taxon>
        <taxon>Yersinia</taxon>
    </lineage>
</organism>
<protein>
    <recommendedName>
        <fullName evidence="1">2-dehydro-3-deoxyphosphooctonate aldolase</fullName>
        <ecNumber evidence="1">2.5.1.55</ecNumber>
    </recommendedName>
    <alternativeName>
        <fullName evidence="1">3-deoxy-D-manno-octulosonic acid 8-phosphate synthase</fullName>
    </alternativeName>
    <alternativeName>
        <fullName evidence="1">KDO-8-phosphate synthase</fullName>
        <shortName evidence="1">KDO 8-P synthase</shortName>
        <shortName evidence="1">KDOPS</shortName>
    </alternativeName>
    <alternativeName>
        <fullName evidence="1">Phospho-2-dehydro-3-deoxyoctonate aldolase</fullName>
    </alternativeName>
</protein>
<reference key="1">
    <citation type="journal article" date="2006" name="PLoS Genet.">
        <title>The complete genome sequence and comparative genome analysis of the high pathogenicity Yersinia enterocolitica strain 8081.</title>
        <authorList>
            <person name="Thomson N.R."/>
            <person name="Howard S."/>
            <person name="Wren B.W."/>
            <person name="Holden M.T.G."/>
            <person name="Crossman L."/>
            <person name="Challis G.L."/>
            <person name="Churcher C."/>
            <person name="Mungall K."/>
            <person name="Brooks K."/>
            <person name="Chillingworth T."/>
            <person name="Feltwell T."/>
            <person name="Abdellah Z."/>
            <person name="Hauser H."/>
            <person name="Jagels K."/>
            <person name="Maddison M."/>
            <person name="Moule S."/>
            <person name="Sanders M."/>
            <person name="Whitehead S."/>
            <person name="Quail M.A."/>
            <person name="Dougan G."/>
            <person name="Parkhill J."/>
            <person name="Prentice M.B."/>
        </authorList>
    </citation>
    <scope>NUCLEOTIDE SEQUENCE [LARGE SCALE GENOMIC DNA]</scope>
    <source>
        <strain>NCTC 13174 / 8081</strain>
    </source>
</reference>